<gene>
    <name evidence="1" type="primary">hemH</name>
    <name type="ordered locus">Daro_0929</name>
</gene>
<protein>
    <recommendedName>
        <fullName evidence="1">Ferrochelatase</fullName>
        <ecNumber evidence="1">4.98.1.1</ecNumber>
    </recommendedName>
    <alternativeName>
        <fullName evidence="1">Heme synthase</fullName>
    </alternativeName>
    <alternativeName>
        <fullName evidence="1">Protoheme ferro-lyase</fullName>
    </alternativeName>
</protein>
<accession>Q47HJ6</accession>
<organism>
    <name type="scientific">Dechloromonas aromatica (strain RCB)</name>
    <dbReference type="NCBI Taxonomy" id="159087"/>
    <lineage>
        <taxon>Bacteria</taxon>
        <taxon>Pseudomonadati</taxon>
        <taxon>Pseudomonadota</taxon>
        <taxon>Betaproteobacteria</taxon>
        <taxon>Rhodocyclales</taxon>
        <taxon>Azonexaceae</taxon>
        <taxon>Dechloromonas</taxon>
    </lineage>
</organism>
<feature type="chain" id="PRO_1000079194" description="Ferrochelatase">
    <location>
        <begin position="1"/>
        <end position="367"/>
    </location>
</feature>
<feature type="binding site" evidence="1">
    <location>
        <position position="213"/>
    </location>
    <ligand>
        <name>Fe cation</name>
        <dbReference type="ChEBI" id="CHEBI:24875"/>
    </ligand>
</feature>
<feature type="binding site" evidence="1">
    <location>
        <position position="294"/>
    </location>
    <ligand>
        <name>Fe cation</name>
        <dbReference type="ChEBI" id="CHEBI:24875"/>
    </ligand>
</feature>
<evidence type="ECO:0000255" key="1">
    <source>
        <dbReference type="HAMAP-Rule" id="MF_00323"/>
    </source>
</evidence>
<keyword id="KW-0963">Cytoplasm</keyword>
<keyword id="KW-0350">Heme biosynthesis</keyword>
<keyword id="KW-0408">Iron</keyword>
<keyword id="KW-0456">Lyase</keyword>
<keyword id="KW-0479">Metal-binding</keyword>
<keyword id="KW-0627">Porphyrin biosynthesis</keyword>
<comment type="function">
    <text evidence="1">Catalyzes the ferrous insertion into protoporphyrin IX.</text>
</comment>
<comment type="catalytic activity">
    <reaction evidence="1">
        <text>heme b + 2 H(+) = protoporphyrin IX + Fe(2+)</text>
        <dbReference type="Rhea" id="RHEA:22584"/>
        <dbReference type="ChEBI" id="CHEBI:15378"/>
        <dbReference type="ChEBI" id="CHEBI:29033"/>
        <dbReference type="ChEBI" id="CHEBI:57306"/>
        <dbReference type="ChEBI" id="CHEBI:60344"/>
        <dbReference type="EC" id="4.98.1.1"/>
    </reaction>
</comment>
<comment type="pathway">
    <text evidence="1">Porphyrin-containing compound metabolism; protoheme biosynthesis; protoheme from protoporphyrin-IX: step 1/1.</text>
</comment>
<comment type="subcellular location">
    <subcellularLocation>
        <location evidence="1">Cytoplasm</location>
    </subcellularLocation>
</comment>
<comment type="similarity">
    <text evidence="1">Belongs to the ferrochelatase family.</text>
</comment>
<name>HEMH_DECAR</name>
<sequence length="367" mass="41258">MPRFLPEPPHRHGNPATTAVVLVNLGTPDAPTAPALKRYLKEFLSDPRVVEIPKPVWWLILNGIILNIRPKKSAAKYASVWMPEGSPLRVHTERQAKLLKGLLGQRGHHLTVTSAMRYGSPSIPEVLAHLKAEGAKRILLVPMYPQYAASTTATVVDEAANWLTKIRNQPEMRFVRNFHDHEGYLAALEKSVRQHWQTNGSLGDNDRLLISFHGLPKRSLDLGDPYFCECHKTGRLLAERLNLKPEQFQICFQSRFGKAEWLQPYTAPTLHEWGSKGVRRVDVICPGFVADCLETLEEIAQEGRDDFLKAGGKEYHYIPALNEDDAWIKALADIAEQHLGGWSTKTAFDPHALETSAREAFKFGARA</sequence>
<proteinExistence type="inferred from homology"/>
<reference key="1">
    <citation type="journal article" date="2009" name="BMC Genomics">
        <title>Metabolic analysis of the soil microbe Dechloromonas aromatica str. RCB: indications of a surprisingly complex life-style and cryptic anaerobic pathways for aromatic degradation.</title>
        <authorList>
            <person name="Salinero K.K."/>
            <person name="Keller K."/>
            <person name="Feil W.S."/>
            <person name="Feil H."/>
            <person name="Trong S."/>
            <person name="Di Bartolo G."/>
            <person name="Lapidus A."/>
        </authorList>
    </citation>
    <scope>NUCLEOTIDE SEQUENCE [LARGE SCALE GENOMIC DNA]</scope>
    <source>
        <strain>RCB</strain>
    </source>
</reference>
<dbReference type="EC" id="4.98.1.1" evidence="1"/>
<dbReference type="EMBL" id="CP000089">
    <property type="protein sequence ID" value="AAZ45685.1"/>
    <property type="molecule type" value="Genomic_DNA"/>
</dbReference>
<dbReference type="SMR" id="Q47HJ6"/>
<dbReference type="STRING" id="159087.Daro_0929"/>
<dbReference type="KEGG" id="dar:Daro_0929"/>
<dbReference type="eggNOG" id="COG0276">
    <property type="taxonomic scope" value="Bacteria"/>
</dbReference>
<dbReference type="HOGENOM" id="CLU_018884_0_0_4"/>
<dbReference type="OrthoDB" id="9809741at2"/>
<dbReference type="UniPathway" id="UPA00252">
    <property type="reaction ID" value="UER00325"/>
</dbReference>
<dbReference type="GO" id="GO:0005737">
    <property type="term" value="C:cytoplasm"/>
    <property type="evidence" value="ECO:0007669"/>
    <property type="project" value="UniProtKB-SubCell"/>
</dbReference>
<dbReference type="GO" id="GO:0004325">
    <property type="term" value="F:ferrochelatase activity"/>
    <property type="evidence" value="ECO:0007669"/>
    <property type="project" value="UniProtKB-UniRule"/>
</dbReference>
<dbReference type="GO" id="GO:0046872">
    <property type="term" value="F:metal ion binding"/>
    <property type="evidence" value="ECO:0007669"/>
    <property type="project" value="UniProtKB-KW"/>
</dbReference>
<dbReference type="GO" id="GO:0006783">
    <property type="term" value="P:heme biosynthetic process"/>
    <property type="evidence" value="ECO:0007669"/>
    <property type="project" value="UniProtKB-UniRule"/>
</dbReference>
<dbReference type="CDD" id="cd00419">
    <property type="entry name" value="Ferrochelatase_C"/>
    <property type="match status" value="1"/>
</dbReference>
<dbReference type="CDD" id="cd03411">
    <property type="entry name" value="Ferrochelatase_N"/>
    <property type="match status" value="1"/>
</dbReference>
<dbReference type="FunFam" id="3.40.50.1400:FF:000002">
    <property type="entry name" value="Ferrochelatase"/>
    <property type="match status" value="1"/>
</dbReference>
<dbReference type="Gene3D" id="3.40.50.1400">
    <property type="match status" value="2"/>
</dbReference>
<dbReference type="HAMAP" id="MF_00323">
    <property type="entry name" value="Ferrochelatase"/>
    <property type="match status" value="1"/>
</dbReference>
<dbReference type="InterPro" id="IPR001015">
    <property type="entry name" value="Ferrochelatase"/>
</dbReference>
<dbReference type="InterPro" id="IPR019772">
    <property type="entry name" value="Ferrochelatase_AS"/>
</dbReference>
<dbReference type="InterPro" id="IPR033644">
    <property type="entry name" value="Ferrochelatase_C"/>
</dbReference>
<dbReference type="InterPro" id="IPR033659">
    <property type="entry name" value="Ferrochelatase_N"/>
</dbReference>
<dbReference type="NCBIfam" id="TIGR00109">
    <property type="entry name" value="hemH"/>
    <property type="match status" value="1"/>
</dbReference>
<dbReference type="PANTHER" id="PTHR11108">
    <property type="entry name" value="FERROCHELATASE"/>
    <property type="match status" value="1"/>
</dbReference>
<dbReference type="PANTHER" id="PTHR11108:SF1">
    <property type="entry name" value="FERROCHELATASE, MITOCHONDRIAL"/>
    <property type="match status" value="1"/>
</dbReference>
<dbReference type="Pfam" id="PF00762">
    <property type="entry name" value="Ferrochelatase"/>
    <property type="match status" value="1"/>
</dbReference>
<dbReference type="SUPFAM" id="SSF53800">
    <property type="entry name" value="Chelatase"/>
    <property type="match status" value="1"/>
</dbReference>
<dbReference type="PROSITE" id="PS00534">
    <property type="entry name" value="FERROCHELATASE"/>
    <property type="match status" value="1"/>
</dbReference>